<proteinExistence type="evidence at transcript level"/>
<gene>
    <name evidence="5" type="primary">PBL25</name>
    <name evidence="7" type="ordered locus">At3g24790</name>
    <name evidence="8" type="ORF">K7P8.8</name>
</gene>
<dbReference type="EC" id="2.7.11.1" evidence="6"/>
<dbReference type="EMBL" id="AB028609">
    <property type="protein sequence ID" value="BAB02889.1"/>
    <property type="molecule type" value="Genomic_DNA"/>
</dbReference>
<dbReference type="EMBL" id="CP002686">
    <property type="protein sequence ID" value="AEE76947.1"/>
    <property type="status" value="ALT_INIT"/>
    <property type="molecule type" value="Genomic_DNA"/>
</dbReference>
<dbReference type="EMBL" id="CP002686">
    <property type="protein sequence ID" value="ANM64380.1"/>
    <property type="molecule type" value="Genomic_DNA"/>
</dbReference>
<dbReference type="EMBL" id="DQ446696">
    <property type="protein sequence ID" value="ABE65965.1"/>
    <property type="molecule type" value="mRNA"/>
</dbReference>
<dbReference type="RefSeq" id="NP_001326412.1">
    <property type="nucleotide sequence ID" value="NM_001338709.1"/>
</dbReference>
<dbReference type="RefSeq" id="NP_189123.2">
    <property type="nucleotide sequence ID" value="NM_113391.3"/>
</dbReference>
<dbReference type="SMR" id="Q9LRY1"/>
<dbReference type="FunCoup" id="Q9LRY1">
    <property type="interactions" value="622"/>
</dbReference>
<dbReference type="STRING" id="3702.Q9LRY1"/>
<dbReference type="PaxDb" id="3702-AT3G24790.1"/>
<dbReference type="ProteomicsDB" id="234947"/>
<dbReference type="EnsemblPlants" id="AT3G24790.2">
    <property type="protein sequence ID" value="AT3G24790.2"/>
    <property type="gene ID" value="AT3G24790"/>
</dbReference>
<dbReference type="GeneID" id="822077"/>
<dbReference type="Gramene" id="AT3G24790.2">
    <property type="protein sequence ID" value="AT3G24790.2"/>
    <property type="gene ID" value="AT3G24790"/>
</dbReference>
<dbReference type="KEGG" id="ath:AT3G24790"/>
<dbReference type="Araport" id="AT3G24790"/>
<dbReference type="TAIR" id="AT3G24790">
    <property type="gene designation" value="PBL25"/>
</dbReference>
<dbReference type="eggNOG" id="KOG1187">
    <property type="taxonomic scope" value="Eukaryota"/>
</dbReference>
<dbReference type="InParanoid" id="Q9LRY1"/>
<dbReference type="OrthoDB" id="4062651at2759"/>
<dbReference type="PhylomeDB" id="Q9LRY1"/>
<dbReference type="PRO" id="PR:Q9LRY1"/>
<dbReference type="Proteomes" id="UP000006548">
    <property type="component" value="Chromosome 3"/>
</dbReference>
<dbReference type="ExpressionAtlas" id="Q9LRY1">
    <property type="expression patterns" value="baseline and differential"/>
</dbReference>
<dbReference type="GO" id="GO:0005886">
    <property type="term" value="C:plasma membrane"/>
    <property type="evidence" value="ECO:0007669"/>
    <property type="project" value="UniProtKB-SubCell"/>
</dbReference>
<dbReference type="GO" id="GO:0005524">
    <property type="term" value="F:ATP binding"/>
    <property type="evidence" value="ECO:0007669"/>
    <property type="project" value="UniProtKB-KW"/>
</dbReference>
<dbReference type="GO" id="GO:0106310">
    <property type="term" value="F:protein serine kinase activity"/>
    <property type="evidence" value="ECO:0007669"/>
    <property type="project" value="RHEA"/>
</dbReference>
<dbReference type="GO" id="GO:0004674">
    <property type="term" value="F:protein serine/threonine kinase activity"/>
    <property type="evidence" value="ECO:0007669"/>
    <property type="project" value="UniProtKB-KW"/>
</dbReference>
<dbReference type="GO" id="GO:0006952">
    <property type="term" value="P:defense response"/>
    <property type="evidence" value="ECO:0007669"/>
    <property type="project" value="UniProtKB-KW"/>
</dbReference>
<dbReference type="CDD" id="cd14066">
    <property type="entry name" value="STKc_IRAK"/>
    <property type="match status" value="1"/>
</dbReference>
<dbReference type="FunFam" id="1.10.510.10:FF:000032">
    <property type="entry name" value="Serine/threonine-protein kinase PBS1"/>
    <property type="match status" value="1"/>
</dbReference>
<dbReference type="FunFam" id="3.30.200.20:FF:000248">
    <property type="entry name" value="Serine/threonine-protein kinase PBS1"/>
    <property type="match status" value="1"/>
</dbReference>
<dbReference type="Gene3D" id="3.30.200.20">
    <property type="entry name" value="Phosphorylase Kinase, domain 1"/>
    <property type="match status" value="1"/>
</dbReference>
<dbReference type="Gene3D" id="1.10.510.10">
    <property type="entry name" value="Transferase(Phosphotransferase) domain 1"/>
    <property type="match status" value="1"/>
</dbReference>
<dbReference type="InterPro" id="IPR011009">
    <property type="entry name" value="Kinase-like_dom_sf"/>
</dbReference>
<dbReference type="InterPro" id="IPR000719">
    <property type="entry name" value="Prot_kinase_dom"/>
</dbReference>
<dbReference type="InterPro" id="IPR017441">
    <property type="entry name" value="Protein_kinase_ATP_BS"/>
</dbReference>
<dbReference type="InterPro" id="IPR008271">
    <property type="entry name" value="Ser/Thr_kinase_AS"/>
</dbReference>
<dbReference type="PANTHER" id="PTHR47985">
    <property type="entry name" value="OS07G0668900 PROTEIN"/>
    <property type="match status" value="1"/>
</dbReference>
<dbReference type="PANTHER" id="PTHR47985:SF59">
    <property type="entry name" value="SERINE_THREONINE-PROTEIN KINASE PBL25-RELATED"/>
    <property type="match status" value="1"/>
</dbReference>
<dbReference type="Pfam" id="PF00069">
    <property type="entry name" value="Pkinase"/>
    <property type="match status" value="1"/>
</dbReference>
<dbReference type="SMART" id="SM00220">
    <property type="entry name" value="S_TKc"/>
    <property type="match status" value="1"/>
</dbReference>
<dbReference type="SUPFAM" id="SSF56112">
    <property type="entry name" value="Protein kinase-like (PK-like)"/>
    <property type="match status" value="1"/>
</dbReference>
<dbReference type="PROSITE" id="PS00107">
    <property type="entry name" value="PROTEIN_KINASE_ATP"/>
    <property type="match status" value="1"/>
</dbReference>
<dbReference type="PROSITE" id="PS50011">
    <property type="entry name" value="PROTEIN_KINASE_DOM"/>
    <property type="match status" value="1"/>
</dbReference>
<dbReference type="PROSITE" id="PS00108">
    <property type="entry name" value="PROTEIN_KINASE_ST"/>
    <property type="match status" value="1"/>
</dbReference>
<comment type="function">
    <text evidence="1">May be involved in plant defense signaling.</text>
</comment>
<comment type="catalytic activity">
    <reaction evidence="6">
        <text>L-seryl-[protein] + ATP = O-phospho-L-seryl-[protein] + ADP + H(+)</text>
        <dbReference type="Rhea" id="RHEA:17989"/>
        <dbReference type="Rhea" id="RHEA-COMP:9863"/>
        <dbReference type="Rhea" id="RHEA-COMP:11604"/>
        <dbReference type="ChEBI" id="CHEBI:15378"/>
        <dbReference type="ChEBI" id="CHEBI:29999"/>
        <dbReference type="ChEBI" id="CHEBI:30616"/>
        <dbReference type="ChEBI" id="CHEBI:83421"/>
        <dbReference type="ChEBI" id="CHEBI:456216"/>
        <dbReference type="EC" id="2.7.11.1"/>
    </reaction>
</comment>
<comment type="catalytic activity">
    <reaction evidence="6">
        <text>L-threonyl-[protein] + ATP = O-phospho-L-threonyl-[protein] + ADP + H(+)</text>
        <dbReference type="Rhea" id="RHEA:46608"/>
        <dbReference type="Rhea" id="RHEA-COMP:11060"/>
        <dbReference type="Rhea" id="RHEA-COMP:11605"/>
        <dbReference type="ChEBI" id="CHEBI:15378"/>
        <dbReference type="ChEBI" id="CHEBI:30013"/>
        <dbReference type="ChEBI" id="CHEBI:30616"/>
        <dbReference type="ChEBI" id="CHEBI:61977"/>
        <dbReference type="ChEBI" id="CHEBI:456216"/>
        <dbReference type="EC" id="2.7.11.1"/>
    </reaction>
</comment>
<comment type="subcellular location">
    <subcellularLocation>
        <location evidence="1">Cell membrane</location>
        <topology evidence="1">Lipid-anchor</topology>
    </subcellularLocation>
</comment>
<comment type="similarity">
    <text evidence="3">Belongs to the protein kinase superfamily. Ser/Thr protein kinase family.</text>
</comment>
<comment type="sequence caution" evidence="6">
    <conflict type="erroneous initiation">
        <sequence resource="EMBL-CDS" id="AEE76947"/>
    </conflict>
    <text>Truncated N-terminus.</text>
</comment>
<feature type="chain" id="PRO_0000438617" description="Probable serine/threonine-protein kinase PBL25">
    <location>
        <begin position="1"/>
        <end position="381"/>
    </location>
</feature>
<feature type="domain" description="Protein kinase" evidence="3">
    <location>
        <begin position="65"/>
        <end position="342"/>
    </location>
</feature>
<feature type="region of interest" description="Disordered" evidence="4">
    <location>
        <begin position="16"/>
        <end position="41"/>
    </location>
</feature>
<feature type="region of interest" description="Disordered" evidence="4">
    <location>
        <begin position="347"/>
        <end position="381"/>
    </location>
</feature>
<feature type="compositionally biased region" description="Polar residues" evidence="4">
    <location>
        <begin position="355"/>
        <end position="381"/>
    </location>
</feature>
<feature type="active site" description="Proton acceptor" evidence="3">
    <location>
        <position position="192"/>
    </location>
</feature>
<feature type="binding site" evidence="3">
    <location>
        <begin position="71"/>
        <end position="79"/>
    </location>
    <ligand>
        <name>ATP</name>
        <dbReference type="ChEBI" id="CHEBI:30616"/>
    </ligand>
</feature>
<feature type="binding site" evidence="3">
    <location>
        <position position="94"/>
    </location>
    <ligand>
        <name>ATP</name>
        <dbReference type="ChEBI" id="CHEBI:30616"/>
    </ligand>
</feature>
<feature type="modified residue" description="Phosphothreonine" evidence="1">
    <location>
        <position position="54"/>
    </location>
</feature>
<feature type="modified residue" description="Phosphotyrosine" evidence="1">
    <location>
        <position position="139"/>
    </location>
</feature>
<feature type="modified residue" description="Phosphoserine" evidence="1">
    <location>
        <position position="196"/>
    </location>
</feature>
<feature type="modified residue" description="Phosphoserine" evidence="1">
    <location>
        <position position="226"/>
    </location>
</feature>
<feature type="modified residue" description="Phosphothreonine" evidence="1">
    <location>
        <position position="232"/>
    </location>
</feature>
<feature type="modified residue" description="Phosphotyrosine" evidence="1">
    <location>
        <position position="240"/>
    </location>
</feature>
<feature type="lipid moiety-binding region" description="S-palmitoyl cysteine" evidence="2">
    <location>
        <position position="3"/>
    </location>
</feature>
<keyword id="KW-0067">ATP-binding</keyword>
<keyword id="KW-1003">Cell membrane</keyword>
<keyword id="KW-0418">Kinase</keyword>
<keyword id="KW-0449">Lipoprotein</keyword>
<keyword id="KW-0472">Membrane</keyword>
<keyword id="KW-0547">Nucleotide-binding</keyword>
<keyword id="KW-0564">Palmitate</keyword>
<keyword id="KW-0597">Phosphoprotein</keyword>
<keyword id="KW-0611">Plant defense</keyword>
<keyword id="KW-0675">Receptor</keyword>
<keyword id="KW-1185">Reference proteome</keyword>
<keyword id="KW-0723">Serine/threonine-protein kinase</keyword>
<keyword id="KW-0808">Transferase</keyword>
<protein>
    <recommendedName>
        <fullName evidence="6">Probable serine/threonine-protein kinase PBL25</fullName>
        <ecNumber evidence="6">2.7.11.1</ecNumber>
    </recommendedName>
    <alternativeName>
        <fullName evidence="5">PBS1-like protein 25</fullName>
    </alternativeName>
</protein>
<sequence length="381" mass="42427">MSCFSCFSSKVLDNEGSSMPAPYKQPNSPKRTTGEVVAKNANGPSNNMGARIFTFRELATATKNFRQECLIGEGGFGRVYKGKLENPAQVVAVKQLDRNGLQGQREFLVEVLMLSLLHHRNLVNLIGYCADGDQRLLVYEYMPLGSLEDHLLDLEPGQKPLDWNTRIKIALGAAKGIEYLHDEADPPVIYRDLKSSNILLDPEYVAKLSDFGLAKLGPVGDTLHVSSRVMGTYGYCAPEYQRTGYLTNKSDVYSFGVVLLELISGRRVIDTMRPSHEQNLVTWALPIFRDPTRYWQLADPLLRGDYPEKSLNQAIAVAAMCLHEEPTVRPLMSDVITALSFLGASSNSSNTGSNHLQQNRSNKYQDAVQWDSSPRYANSQM</sequence>
<organism>
    <name type="scientific">Arabidopsis thaliana</name>
    <name type="common">Mouse-ear cress</name>
    <dbReference type="NCBI Taxonomy" id="3702"/>
    <lineage>
        <taxon>Eukaryota</taxon>
        <taxon>Viridiplantae</taxon>
        <taxon>Streptophyta</taxon>
        <taxon>Embryophyta</taxon>
        <taxon>Tracheophyta</taxon>
        <taxon>Spermatophyta</taxon>
        <taxon>Magnoliopsida</taxon>
        <taxon>eudicotyledons</taxon>
        <taxon>Gunneridae</taxon>
        <taxon>Pentapetalae</taxon>
        <taxon>rosids</taxon>
        <taxon>malvids</taxon>
        <taxon>Brassicales</taxon>
        <taxon>Brassicaceae</taxon>
        <taxon>Camelineae</taxon>
        <taxon>Arabidopsis</taxon>
    </lineage>
</organism>
<evidence type="ECO:0000250" key="1">
    <source>
        <dbReference type="UniProtKB" id="O48814"/>
    </source>
</evidence>
<evidence type="ECO:0000250" key="2">
    <source>
        <dbReference type="UniProtKB" id="Q9FE20"/>
    </source>
</evidence>
<evidence type="ECO:0000255" key="3">
    <source>
        <dbReference type="PROSITE-ProRule" id="PRU00159"/>
    </source>
</evidence>
<evidence type="ECO:0000256" key="4">
    <source>
        <dbReference type="SAM" id="MobiDB-lite"/>
    </source>
</evidence>
<evidence type="ECO:0000303" key="5">
    <source>
    </source>
</evidence>
<evidence type="ECO:0000305" key="6"/>
<evidence type="ECO:0000312" key="7">
    <source>
        <dbReference type="Araport" id="AT3G24790"/>
    </source>
</evidence>
<evidence type="ECO:0000312" key="8">
    <source>
        <dbReference type="EMBL" id="BAB02889.1"/>
    </source>
</evidence>
<reference key="1">
    <citation type="journal article" date="2000" name="DNA Res.">
        <title>Structural analysis of Arabidopsis thaliana chromosome 3. I. Sequence features of the regions of 4,504,864 bp covered by sixty P1 and TAC clones.</title>
        <authorList>
            <person name="Sato S."/>
            <person name="Nakamura Y."/>
            <person name="Kaneko T."/>
            <person name="Katoh T."/>
            <person name="Asamizu E."/>
            <person name="Tabata S."/>
        </authorList>
    </citation>
    <scope>NUCLEOTIDE SEQUENCE [LARGE SCALE GENOMIC DNA]</scope>
    <source>
        <strain>cv. Columbia</strain>
    </source>
</reference>
<reference key="2">
    <citation type="journal article" date="2017" name="Plant J.">
        <title>Araport11: a complete reannotation of the Arabidopsis thaliana reference genome.</title>
        <authorList>
            <person name="Cheng C.Y."/>
            <person name="Krishnakumar V."/>
            <person name="Chan A.P."/>
            <person name="Thibaud-Nissen F."/>
            <person name="Schobel S."/>
            <person name="Town C.D."/>
        </authorList>
    </citation>
    <scope>GENOME REANNOTATION</scope>
    <source>
        <strain>cv. Columbia</strain>
    </source>
</reference>
<reference key="3">
    <citation type="journal article" date="2006" name="Plant Biotechnol. J.">
        <title>Simultaneous high-throughput recombinational cloning of open reading frames in closed and open configurations.</title>
        <authorList>
            <person name="Underwood B.A."/>
            <person name="Vanderhaeghen R."/>
            <person name="Whitford R."/>
            <person name="Town C.D."/>
            <person name="Hilson P."/>
        </authorList>
    </citation>
    <scope>NUCLEOTIDE SEQUENCE [LARGE SCALE MRNA] OF 19-381</scope>
    <source>
        <strain>cv. Columbia</strain>
    </source>
</reference>
<reference key="4">
    <citation type="journal article" date="2010" name="Cell Host Microbe">
        <title>Receptor-like cytoplasmic kinases integrate signaling from multiple plant immune receptors and are targeted by a Pseudomonas syringae effector.</title>
        <authorList>
            <person name="Zhang J."/>
            <person name="Li W."/>
            <person name="Xiang T."/>
            <person name="Liu Z."/>
            <person name="Laluk K."/>
            <person name="Ding X."/>
            <person name="Zou Y."/>
            <person name="Gao M."/>
            <person name="Zhang X."/>
            <person name="Chen S."/>
            <person name="Mengiste T."/>
            <person name="Zhang Y."/>
            <person name="Zhou J.M."/>
        </authorList>
    </citation>
    <scope>GENE FAMILY</scope>
    <scope>NOMENCLATURE</scope>
</reference>
<name>PBL25_ARATH</name>
<accession>Q9LRY1</accession>
<accession>Q1PEM1</accession>